<sequence length="270" mass="30113">MAAPGEALTQSGYIEHHLSNLSLAKLGMVADETSFWNVHIDSLFFSVLTGMLFLWVFRSVAKKATTGVPGKLQCFVEMVVEFVADNVKETFHGRNPLVAPLALTIFCWVILMNLMDLIPIDFLPYSAAHWLGIPYLKVVPSADVNITMAMALGVFALMIYYSIKVKGLGGFAKELALHPFNHPIMIPFNLLLEVISLLAKPLSLGMRLFGNMFAGEVVFILIAAMLPWYLQWVGALPWAIFHILVILIQAFVFMMLTIVYLSMAHEDPDH</sequence>
<evidence type="ECO:0000255" key="1">
    <source>
        <dbReference type="HAMAP-Rule" id="MF_01393"/>
    </source>
</evidence>
<comment type="function">
    <text evidence="1">Key component of the proton channel; it plays a direct role in the translocation of protons across the membrane.</text>
</comment>
<comment type="subunit">
    <text evidence="1">F-type ATPases have 2 components, CF(1) - the catalytic core - and CF(0) - the membrane proton channel. CF(1) has five subunits: alpha(3), beta(3), gamma(1), delta(1), epsilon(1). CF(0) has three main subunits: a(1), b(2) and c(9-12). The alpha and beta chains form an alternating ring which encloses part of the gamma chain. CF(1) is attached to CF(0) by a central stalk formed by the gamma and epsilon chains, while a peripheral stalk is formed by the delta and b chains.</text>
</comment>
<comment type="subcellular location">
    <subcellularLocation>
        <location evidence="1">Cell inner membrane</location>
        <topology evidence="1">Multi-pass membrane protein</topology>
    </subcellularLocation>
</comment>
<comment type="similarity">
    <text evidence="1">Belongs to the ATPase A chain family.</text>
</comment>
<accession>B6EHU3</accession>
<keyword id="KW-0066">ATP synthesis</keyword>
<keyword id="KW-0997">Cell inner membrane</keyword>
<keyword id="KW-1003">Cell membrane</keyword>
<keyword id="KW-0138">CF(0)</keyword>
<keyword id="KW-0375">Hydrogen ion transport</keyword>
<keyword id="KW-0406">Ion transport</keyword>
<keyword id="KW-0472">Membrane</keyword>
<keyword id="KW-0812">Transmembrane</keyword>
<keyword id="KW-1133">Transmembrane helix</keyword>
<keyword id="KW-0813">Transport</keyword>
<proteinExistence type="inferred from homology"/>
<organism>
    <name type="scientific">Aliivibrio salmonicida (strain LFI1238)</name>
    <name type="common">Vibrio salmonicida (strain LFI1238)</name>
    <dbReference type="NCBI Taxonomy" id="316275"/>
    <lineage>
        <taxon>Bacteria</taxon>
        <taxon>Pseudomonadati</taxon>
        <taxon>Pseudomonadota</taxon>
        <taxon>Gammaproteobacteria</taxon>
        <taxon>Vibrionales</taxon>
        <taxon>Vibrionaceae</taxon>
        <taxon>Aliivibrio</taxon>
    </lineage>
</organism>
<feature type="chain" id="PRO_1000145254" description="ATP synthase subunit a">
    <location>
        <begin position="1"/>
        <end position="270"/>
    </location>
</feature>
<feature type="transmembrane region" description="Helical" evidence="1">
    <location>
        <begin position="37"/>
        <end position="57"/>
    </location>
</feature>
<feature type="transmembrane region" description="Helical" evidence="1">
    <location>
        <begin position="98"/>
        <end position="118"/>
    </location>
</feature>
<feature type="transmembrane region" description="Helical" evidence="1">
    <location>
        <begin position="143"/>
        <end position="163"/>
    </location>
</feature>
<feature type="transmembrane region" description="Helical" evidence="1">
    <location>
        <begin position="217"/>
        <end position="237"/>
    </location>
</feature>
<feature type="transmembrane region" description="Helical" evidence="1">
    <location>
        <begin position="239"/>
        <end position="259"/>
    </location>
</feature>
<gene>
    <name evidence="1" type="primary">atpB</name>
    <name type="ordered locus">VSAL_I3065</name>
</gene>
<name>ATP6_ALISL</name>
<dbReference type="EMBL" id="FM178379">
    <property type="protein sequence ID" value="CAQ80749.1"/>
    <property type="molecule type" value="Genomic_DNA"/>
</dbReference>
<dbReference type="RefSeq" id="WP_012551448.1">
    <property type="nucleotide sequence ID" value="NC_011312.1"/>
</dbReference>
<dbReference type="SMR" id="B6EHU3"/>
<dbReference type="KEGG" id="vsa:VSAL_I3065"/>
<dbReference type="eggNOG" id="COG0356">
    <property type="taxonomic scope" value="Bacteria"/>
</dbReference>
<dbReference type="HOGENOM" id="CLU_041018_1_0_6"/>
<dbReference type="Proteomes" id="UP000001730">
    <property type="component" value="Chromosome 1"/>
</dbReference>
<dbReference type="GO" id="GO:0005886">
    <property type="term" value="C:plasma membrane"/>
    <property type="evidence" value="ECO:0007669"/>
    <property type="project" value="UniProtKB-SubCell"/>
</dbReference>
<dbReference type="GO" id="GO:0045259">
    <property type="term" value="C:proton-transporting ATP synthase complex"/>
    <property type="evidence" value="ECO:0007669"/>
    <property type="project" value="UniProtKB-KW"/>
</dbReference>
<dbReference type="GO" id="GO:0046933">
    <property type="term" value="F:proton-transporting ATP synthase activity, rotational mechanism"/>
    <property type="evidence" value="ECO:0007669"/>
    <property type="project" value="UniProtKB-UniRule"/>
</dbReference>
<dbReference type="GO" id="GO:0042777">
    <property type="term" value="P:proton motive force-driven plasma membrane ATP synthesis"/>
    <property type="evidence" value="ECO:0007669"/>
    <property type="project" value="TreeGrafter"/>
</dbReference>
<dbReference type="CDD" id="cd00310">
    <property type="entry name" value="ATP-synt_Fo_a_6"/>
    <property type="match status" value="1"/>
</dbReference>
<dbReference type="FunFam" id="1.20.120.220:FF:000002">
    <property type="entry name" value="ATP synthase subunit a"/>
    <property type="match status" value="1"/>
</dbReference>
<dbReference type="Gene3D" id="1.20.120.220">
    <property type="entry name" value="ATP synthase, F0 complex, subunit A"/>
    <property type="match status" value="1"/>
</dbReference>
<dbReference type="HAMAP" id="MF_01393">
    <property type="entry name" value="ATP_synth_a_bact"/>
    <property type="match status" value="1"/>
</dbReference>
<dbReference type="InterPro" id="IPR045082">
    <property type="entry name" value="ATP_syn_F0_a_bact/chloroplast"/>
</dbReference>
<dbReference type="InterPro" id="IPR000568">
    <property type="entry name" value="ATP_synth_F0_asu"/>
</dbReference>
<dbReference type="InterPro" id="IPR023011">
    <property type="entry name" value="ATP_synth_F0_asu_AS"/>
</dbReference>
<dbReference type="InterPro" id="IPR035908">
    <property type="entry name" value="F0_ATP_A_sf"/>
</dbReference>
<dbReference type="NCBIfam" id="TIGR01131">
    <property type="entry name" value="ATP_synt_6_or_A"/>
    <property type="match status" value="1"/>
</dbReference>
<dbReference type="NCBIfam" id="NF004477">
    <property type="entry name" value="PRK05815.1-1"/>
    <property type="match status" value="1"/>
</dbReference>
<dbReference type="PANTHER" id="PTHR42823">
    <property type="entry name" value="ATP SYNTHASE SUBUNIT A, CHLOROPLASTIC"/>
    <property type="match status" value="1"/>
</dbReference>
<dbReference type="PANTHER" id="PTHR42823:SF3">
    <property type="entry name" value="ATP SYNTHASE SUBUNIT A, CHLOROPLASTIC"/>
    <property type="match status" value="1"/>
</dbReference>
<dbReference type="Pfam" id="PF00119">
    <property type="entry name" value="ATP-synt_A"/>
    <property type="match status" value="1"/>
</dbReference>
<dbReference type="PRINTS" id="PR00123">
    <property type="entry name" value="ATPASEA"/>
</dbReference>
<dbReference type="SUPFAM" id="SSF81336">
    <property type="entry name" value="F1F0 ATP synthase subunit A"/>
    <property type="match status" value="1"/>
</dbReference>
<dbReference type="PROSITE" id="PS00449">
    <property type="entry name" value="ATPASE_A"/>
    <property type="match status" value="1"/>
</dbReference>
<reference key="1">
    <citation type="journal article" date="2008" name="BMC Genomics">
        <title>The genome sequence of the fish pathogen Aliivibrio salmonicida strain LFI1238 shows extensive evidence of gene decay.</title>
        <authorList>
            <person name="Hjerde E."/>
            <person name="Lorentzen M.S."/>
            <person name="Holden M.T."/>
            <person name="Seeger K."/>
            <person name="Paulsen S."/>
            <person name="Bason N."/>
            <person name="Churcher C."/>
            <person name="Harris D."/>
            <person name="Norbertczak H."/>
            <person name="Quail M.A."/>
            <person name="Sanders S."/>
            <person name="Thurston S."/>
            <person name="Parkhill J."/>
            <person name="Willassen N.P."/>
            <person name="Thomson N.R."/>
        </authorList>
    </citation>
    <scope>NUCLEOTIDE SEQUENCE [LARGE SCALE GENOMIC DNA]</scope>
    <source>
        <strain>LFI1238</strain>
    </source>
</reference>
<protein>
    <recommendedName>
        <fullName evidence="1">ATP synthase subunit a</fullName>
    </recommendedName>
    <alternativeName>
        <fullName evidence="1">ATP synthase F0 sector subunit a</fullName>
    </alternativeName>
    <alternativeName>
        <fullName evidence="1">F-ATPase subunit 6</fullName>
    </alternativeName>
</protein>